<name>NCAP_I83A8</name>
<sequence>MASQGTKRSYEQMETDGERQNATEIRASVGKMIDGIGRFYIQMCTELKLSDYEGRLIQNSLTIERMVLSAFDERRNRYLEEHPSAGKDPKKTGGPIYKRVDGRWMRELVLYDKEEIRRIWRQANNGDDATAGLTHMMIWHSNLNDTTYQRTRALVRTGMDPRMCSLMQGSTLPRRSGAAGAAVKGIGTMVMELIRMIKRGINDRNFWRGENGRKTRSAYERMCNILKGKFQTAAQRAMMDQVRESRNPGNAEIEDLIFSARSALILRGSVAHKSCLPACVYGPAVSSGYDFEKEGYSLVGIDPFKLLQNSQVYSLIRPNENPAHKSQLVWMACHSAAFEDLRLLSFIRGTKVSPRGKLSTRGVQIASNENMDNMESSTLELRSRYWAIRTRSGGNTNQQRASAGQISVQPTFSVQRNLPFEKSTVMAAFTGNTEGRTSDMRAEIIRMMEGAKPEEVSFRGRGVFELSDEKATNPIVPSFDMSNEGSYFFGDNAEEYDN</sequence>
<organismHost>
    <name type="scientific">Aves</name>
    <dbReference type="NCBI Taxonomy" id="8782"/>
</organismHost>
<organismHost>
    <name type="scientific">Cetacea</name>
    <name type="common">whales</name>
    <dbReference type="NCBI Taxonomy" id="9721"/>
</organismHost>
<organismHost>
    <name type="scientific">Homo sapiens</name>
    <name type="common">Human</name>
    <dbReference type="NCBI Taxonomy" id="9606"/>
</organismHost>
<organismHost>
    <name type="scientific">Phocidae</name>
    <name type="common">true seals</name>
    <dbReference type="NCBI Taxonomy" id="9709"/>
</organismHost>
<organismHost>
    <name type="scientific">Sus scrofa</name>
    <name type="common">Pig</name>
    <dbReference type="NCBI Taxonomy" id="9823"/>
</organismHost>
<protein>
    <recommendedName>
        <fullName evidence="1">Nucleoprotein</fullName>
    </recommendedName>
    <alternativeName>
        <fullName evidence="1">Nucleocapsid protein</fullName>
        <shortName evidence="1">Protein N</shortName>
    </alternativeName>
</protein>
<organism>
    <name type="scientific">Influenza A virus (strain A/Hong Kong/5/1983 H3N2)</name>
    <dbReference type="NCBI Taxonomy" id="387159"/>
    <lineage>
        <taxon>Viruses</taxon>
        <taxon>Riboviria</taxon>
        <taxon>Orthornavirae</taxon>
        <taxon>Negarnaviricota</taxon>
        <taxon>Polyploviricotina</taxon>
        <taxon>Insthoviricetes</taxon>
        <taxon>Articulavirales</taxon>
        <taxon>Orthomyxoviridae</taxon>
        <taxon>Alphainfluenzavirus</taxon>
        <taxon>Alphainfluenzavirus influenzae</taxon>
        <taxon>Influenza A virus</taxon>
    </lineage>
</organism>
<proteinExistence type="inferred from homology"/>
<comment type="function">
    <text evidence="1">Encapsidates the negative strand viral RNA, protecting it from nucleases. The encapsidated genomic RNA is termed the ribonucleoprotein (RNP) and serves as template for transcription and replication. The RNP needs to be localized in the host nucleus to start an infectious cycle, but is too large to diffuse through the nuclear pore complex. NP comprises at least 2 nuclear localization signals that are responsible for the active RNP import into the nucleus through cellular importin alpha/beta pathway. Later in the infection, nclear export of RNPs are mediated through viral proteins NEP interacting with M1 which binds nucleoproteins. It is possible that nucleoprotein binds directly host exportin-1/XPO1 and plays an active role in RNPs nuclear export. M1 interaction with RNP seems to hide nucleoprotein's nuclear localization signals. Soon after a virion infects a new cell, M1 dissociates from the RNP under acidification of the virion driven by M2 protein. Dissociation of M1 from RNP unmasks nucleoprotein's nuclear localization signals, targeting the RNP to the nucleus.</text>
</comment>
<comment type="subunit">
    <text evidence="1">Homomultimerizes to form the nucleocapsid. May bind host exportin-1/XPO1. Binds to viral genomic RNA. Protein-RNA contacts are mediated by a combination of electrostatic interactions between positively charged residues and the phosphate backbone and planar interactions between aromatic side chains and bases.</text>
</comment>
<comment type="subcellular location">
    <subcellularLocation>
        <location evidence="1">Virion</location>
    </subcellularLocation>
    <subcellularLocation>
        <location evidence="1">Host nucleus</location>
    </subcellularLocation>
</comment>
<comment type="PTM">
    <text evidence="1">Late in virus-infected cells, may be cleaved from a 56-kDa protein to a 53-kDa protein by a cellular caspase. This cleavage might be a marker for the onset of apoptosis in infected cells or have a specific function in virus host interaction.</text>
</comment>
<comment type="similarity">
    <text evidence="1">Belongs to the influenza viruses nucleoprotein family.</text>
</comment>
<accession>P16982</accession>
<accession>Q38SQ4</accession>
<reference key="1">
    <citation type="journal article" date="1989" name="Virology">
        <title>Two subtypes of nucleoproteins (NP) of influenza A viruses.</title>
        <authorList>
            <person name="Gammelin M."/>
            <person name="Mandler J."/>
            <person name="Scholtissek C."/>
        </authorList>
    </citation>
    <scope>NUCLEOTIDE SEQUENCE [GENOMIC RNA]</scope>
</reference>
<reference key="2">
    <citation type="submission" date="2005-10" db="EMBL/GenBank/DDBJ databases">
        <title>The NIAID influenza genome sequencing project.</title>
        <authorList>
            <person name="Ghedin E."/>
            <person name="Spiro D."/>
            <person name="Miller N."/>
            <person name="Zaborsky J."/>
            <person name="Feldblyum T."/>
            <person name="Subbu V."/>
            <person name="Shumway M."/>
            <person name="Sparenborg J."/>
            <person name="Groveman L."/>
            <person name="Halpin R."/>
            <person name="Sitz J."/>
            <person name="Koo H."/>
            <person name="Salzberg S.L."/>
            <person name="Webster R.G."/>
            <person name="Hoffmann E."/>
            <person name="Krauss S."/>
            <person name="Naeve C."/>
            <person name="Bao Y."/>
            <person name="Bolotov P."/>
            <person name="Dernovoy D."/>
            <person name="Kiryutin B."/>
            <person name="Lipman D.J."/>
            <person name="Tatusova T."/>
        </authorList>
    </citation>
    <scope>NUCLEOTIDE SEQUENCE [GENOMIC RNA]</scope>
</reference>
<keyword id="KW-0167">Capsid protein</keyword>
<keyword id="KW-1139">Helical capsid protein</keyword>
<keyword id="KW-1048">Host nucleus</keyword>
<keyword id="KW-0945">Host-virus interaction</keyword>
<keyword id="KW-0687">Ribonucleoprotein</keyword>
<keyword id="KW-0694">RNA-binding</keyword>
<keyword id="KW-0543">Viral nucleoprotein</keyword>
<keyword id="KW-1163">Viral penetration into host nucleus</keyword>
<keyword id="KW-0946">Virion</keyword>
<keyword id="KW-1160">Virus entry into host cell</keyword>
<feature type="chain" id="PRO_0000079065" description="Nucleoprotein">
    <location>
        <begin position="1"/>
        <end position="498"/>
    </location>
</feature>
<feature type="region of interest" description="Disordered" evidence="2">
    <location>
        <begin position="1"/>
        <end position="21"/>
    </location>
</feature>
<feature type="short sequence motif" description="Unconventional nuclear localization signal" evidence="1">
    <location>
        <begin position="1"/>
        <end position="18"/>
    </location>
</feature>
<feature type="short sequence motif" description="Bipartite nuclear localization signal" evidence="1">
    <location>
        <begin position="198"/>
        <end position="216"/>
    </location>
</feature>
<feature type="compositionally biased region" description="Basic and acidic residues" evidence="2">
    <location>
        <begin position="8"/>
        <end position="21"/>
    </location>
</feature>
<feature type="sequence conflict" description="In Ref. 1; AAA43241." ref="1">
    <original>E</original>
    <variation>R</variation>
    <location>
        <position position="64"/>
    </location>
</feature>
<feature type="sequence conflict" description="In Ref. 1; AAA43241." ref="1">
    <original>A</original>
    <variation>R</variation>
    <location>
        <position position="131"/>
    </location>
</feature>
<feature type="sequence conflict" description="In Ref. 1; AAA43241." ref="1">
    <original>N</original>
    <variation>A</variation>
    <location>
        <position position="373"/>
    </location>
</feature>
<feature type="sequence conflict" description="In Ref. 1; AAA43241." ref="1">
    <original>T</original>
    <variation>A</variation>
    <location>
        <position position="411"/>
    </location>
</feature>
<feature type="sequence conflict" description="In Ref. 1; AAA43241." ref="1">
    <original>V</original>
    <variation>I</variation>
    <location>
        <position position="425"/>
    </location>
</feature>
<evidence type="ECO:0000255" key="1">
    <source>
        <dbReference type="HAMAP-Rule" id="MF_04070"/>
    </source>
</evidence>
<evidence type="ECO:0000256" key="2">
    <source>
        <dbReference type="SAM" id="MobiDB-lite"/>
    </source>
</evidence>
<gene>
    <name evidence="1" type="primary">NP</name>
</gene>
<dbReference type="EMBL" id="M22577">
    <property type="protein sequence ID" value="AAA43241.1"/>
    <property type="molecule type" value="Genomic_RNA"/>
</dbReference>
<dbReference type="EMBL" id="CY003739">
    <property type="protein sequence ID" value="ABB04943.1"/>
    <property type="molecule type" value="Genomic_RNA"/>
</dbReference>
<dbReference type="PIR" id="E31470">
    <property type="entry name" value="VHIVN5"/>
</dbReference>
<dbReference type="SMR" id="P16982"/>
<dbReference type="PRO" id="PR:P16982"/>
<dbReference type="Proteomes" id="UP000167548">
    <property type="component" value="Genome"/>
</dbReference>
<dbReference type="GO" id="GO:0019029">
    <property type="term" value="C:helical viral capsid"/>
    <property type="evidence" value="ECO:0007669"/>
    <property type="project" value="UniProtKB-UniRule"/>
</dbReference>
<dbReference type="GO" id="GO:0043657">
    <property type="term" value="C:host cell"/>
    <property type="evidence" value="ECO:0007669"/>
    <property type="project" value="GOC"/>
</dbReference>
<dbReference type="GO" id="GO:0042025">
    <property type="term" value="C:host cell nucleus"/>
    <property type="evidence" value="ECO:0007669"/>
    <property type="project" value="UniProtKB-SubCell"/>
</dbReference>
<dbReference type="GO" id="GO:1990904">
    <property type="term" value="C:ribonucleoprotein complex"/>
    <property type="evidence" value="ECO:0007669"/>
    <property type="project" value="UniProtKB-KW"/>
</dbReference>
<dbReference type="GO" id="GO:0019013">
    <property type="term" value="C:viral nucleocapsid"/>
    <property type="evidence" value="ECO:0007669"/>
    <property type="project" value="UniProtKB-UniRule"/>
</dbReference>
<dbReference type="GO" id="GO:0003723">
    <property type="term" value="F:RNA binding"/>
    <property type="evidence" value="ECO:0007669"/>
    <property type="project" value="UniProtKB-UniRule"/>
</dbReference>
<dbReference type="GO" id="GO:0005198">
    <property type="term" value="F:structural molecule activity"/>
    <property type="evidence" value="ECO:0007669"/>
    <property type="project" value="UniProtKB-UniRule"/>
</dbReference>
<dbReference type="GO" id="GO:0046718">
    <property type="term" value="P:symbiont entry into host cell"/>
    <property type="evidence" value="ECO:0007669"/>
    <property type="project" value="UniProtKB-KW"/>
</dbReference>
<dbReference type="GO" id="GO:0075732">
    <property type="term" value="P:viral penetration into host nucleus"/>
    <property type="evidence" value="ECO:0007669"/>
    <property type="project" value="UniProtKB-UniRule"/>
</dbReference>
<dbReference type="HAMAP" id="MF_04070">
    <property type="entry name" value="INFV_NCAP"/>
    <property type="match status" value="1"/>
</dbReference>
<dbReference type="InterPro" id="IPR002141">
    <property type="entry name" value="Flu_NP"/>
</dbReference>
<dbReference type="Pfam" id="PF00506">
    <property type="entry name" value="Flu_NP"/>
    <property type="match status" value="1"/>
</dbReference>
<dbReference type="SUPFAM" id="SSF161003">
    <property type="entry name" value="flu NP-like"/>
    <property type="match status" value="1"/>
</dbReference>